<gene>
    <name evidence="1" type="primary">gpmI</name>
    <name type="synonym">pgm</name>
    <name type="ordered locus">Atu3469</name>
    <name type="ORF">AGR_L_2721</name>
</gene>
<protein>
    <recommendedName>
        <fullName evidence="1">2,3-bisphosphoglycerate-independent phosphoglycerate mutase</fullName>
        <shortName evidence="1">BPG-independent PGAM</shortName>
        <shortName evidence="1">Phosphoglyceromutase</shortName>
        <shortName evidence="1">iPGM</shortName>
        <ecNumber evidence="1">5.4.2.12</ecNumber>
    </recommendedName>
</protein>
<sequence length="505" mass="53638">MRTPKPVVLTILDGWGLNEDTSSNAPVLANTPTMDRLFATCPNATLTTFGPNVGLPTGQMGNSEVGHTNIGAGRIVAMDLGQIDLAIEDGSFFRNAAMLDFAATVKAAGGVAHLMCVVSDGGVHGHILHGQAAVKLMVSHGLKVVVHAITDGRDVAPQSAEDFVAALVASLPQGASIGTVIGRYYAMDRDNRWERVEKAYDAMVLGKGEHARDAVSAVAQSYANKVTDEFILPTVIDGYEGFKAGDGLFCLNFRADRAREILLAIGADDFDGFAREKPVLSALLGMVEYSTRHSDFMTTAYPKRDIVNTLGAWVAKQGLTQFRLAETEKYPHVTFFLNGGKEEPEVGEDRFMPKSPKVATYDLQPEMSAAEVTEKFVEVIGKGYDLIVTNYANPDMVGHTGDLQAAIKACEAVDRGLGAVVAALEKVGGAMLVIADHGNCETMVDPVTGGPHTAHTTNPVPVILFGGPEGAKVHDGILADVAPTLLQLMNVPLPPEMTGKSLIDL</sequence>
<evidence type="ECO:0000255" key="1">
    <source>
        <dbReference type="HAMAP-Rule" id="MF_01038"/>
    </source>
</evidence>
<reference key="1">
    <citation type="journal article" date="2001" name="Science">
        <title>The genome of the natural genetic engineer Agrobacterium tumefaciens C58.</title>
        <authorList>
            <person name="Wood D.W."/>
            <person name="Setubal J.C."/>
            <person name="Kaul R."/>
            <person name="Monks D.E."/>
            <person name="Kitajima J.P."/>
            <person name="Okura V.K."/>
            <person name="Zhou Y."/>
            <person name="Chen L."/>
            <person name="Wood G.E."/>
            <person name="Almeida N.F. Jr."/>
            <person name="Woo L."/>
            <person name="Chen Y."/>
            <person name="Paulsen I.T."/>
            <person name="Eisen J.A."/>
            <person name="Karp P.D."/>
            <person name="Bovee D. Sr."/>
            <person name="Chapman P."/>
            <person name="Clendenning J."/>
            <person name="Deatherage G."/>
            <person name="Gillet W."/>
            <person name="Grant C."/>
            <person name="Kutyavin T."/>
            <person name="Levy R."/>
            <person name="Li M.-J."/>
            <person name="McClelland E."/>
            <person name="Palmieri A."/>
            <person name="Raymond C."/>
            <person name="Rouse G."/>
            <person name="Saenphimmachak C."/>
            <person name="Wu Z."/>
            <person name="Romero P."/>
            <person name="Gordon D."/>
            <person name="Zhang S."/>
            <person name="Yoo H."/>
            <person name="Tao Y."/>
            <person name="Biddle P."/>
            <person name="Jung M."/>
            <person name="Krespan W."/>
            <person name="Perry M."/>
            <person name="Gordon-Kamm B."/>
            <person name="Liao L."/>
            <person name="Kim S."/>
            <person name="Hendrick C."/>
            <person name="Zhao Z.-Y."/>
            <person name="Dolan M."/>
            <person name="Chumley F."/>
            <person name="Tingey S.V."/>
            <person name="Tomb J.-F."/>
            <person name="Gordon M.P."/>
            <person name="Olson M.V."/>
            <person name="Nester E.W."/>
        </authorList>
    </citation>
    <scope>NUCLEOTIDE SEQUENCE [LARGE SCALE GENOMIC DNA]</scope>
    <source>
        <strain>C58 / ATCC 33970</strain>
    </source>
</reference>
<reference key="2">
    <citation type="journal article" date="2001" name="Science">
        <title>Genome sequence of the plant pathogen and biotechnology agent Agrobacterium tumefaciens C58.</title>
        <authorList>
            <person name="Goodner B."/>
            <person name="Hinkle G."/>
            <person name="Gattung S."/>
            <person name="Miller N."/>
            <person name="Blanchard M."/>
            <person name="Qurollo B."/>
            <person name="Goldman B.S."/>
            <person name="Cao Y."/>
            <person name="Askenazi M."/>
            <person name="Halling C."/>
            <person name="Mullin L."/>
            <person name="Houmiel K."/>
            <person name="Gordon J."/>
            <person name="Vaudin M."/>
            <person name="Iartchouk O."/>
            <person name="Epp A."/>
            <person name="Liu F."/>
            <person name="Wollam C."/>
            <person name="Allinger M."/>
            <person name="Doughty D."/>
            <person name="Scott C."/>
            <person name="Lappas C."/>
            <person name="Markelz B."/>
            <person name="Flanagan C."/>
            <person name="Crowell C."/>
            <person name="Gurson J."/>
            <person name="Lomo C."/>
            <person name="Sear C."/>
            <person name="Strub G."/>
            <person name="Cielo C."/>
            <person name="Slater S."/>
        </authorList>
    </citation>
    <scope>NUCLEOTIDE SEQUENCE [LARGE SCALE GENOMIC DNA]</scope>
    <source>
        <strain>C58 / ATCC 33970</strain>
    </source>
</reference>
<name>GPMI_AGRFC</name>
<accession>Q8UAA5</accession>
<feature type="chain" id="PRO_0000212116" description="2,3-bisphosphoglycerate-independent phosphoglycerate mutase">
    <location>
        <begin position="1"/>
        <end position="505"/>
    </location>
</feature>
<feature type="active site" description="Phosphoserine intermediate" evidence="1">
    <location>
        <position position="63"/>
    </location>
</feature>
<feature type="binding site" evidence="1">
    <location>
        <position position="13"/>
    </location>
    <ligand>
        <name>Mn(2+)</name>
        <dbReference type="ChEBI" id="CHEBI:29035"/>
        <label>2</label>
    </ligand>
</feature>
<feature type="binding site" evidence="1">
    <location>
        <position position="63"/>
    </location>
    <ligand>
        <name>Mn(2+)</name>
        <dbReference type="ChEBI" id="CHEBI:29035"/>
        <label>2</label>
    </ligand>
</feature>
<feature type="binding site" evidence="1">
    <location>
        <position position="124"/>
    </location>
    <ligand>
        <name>substrate</name>
    </ligand>
</feature>
<feature type="binding site" evidence="1">
    <location>
        <begin position="153"/>
        <end position="154"/>
    </location>
    <ligand>
        <name>substrate</name>
    </ligand>
</feature>
<feature type="binding site" evidence="1">
    <location>
        <position position="183"/>
    </location>
    <ligand>
        <name>substrate</name>
    </ligand>
</feature>
<feature type="binding site" evidence="1">
    <location>
        <position position="189"/>
    </location>
    <ligand>
        <name>substrate</name>
    </ligand>
</feature>
<feature type="binding site" evidence="1">
    <location>
        <begin position="254"/>
        <end position="257"/>
    </location>
    <ligand>
        <name>substrate</name>
    </ligand>
</feature>
<feature type="binding site" evidence="1">
    <location>
        <position position="329"/>
    </location>
    <ligand>
        <name>substrate</name>
    </ligand>
</feature>
<feature type="binding site" evidence="1">
    <location>
        <position position="395"/>
    </location>
    <ligand>
        <name>Mn(2+)</name>
        <dbReference type="ChEBI" id="CHEBI:29035"/>
        <label>1</label>
    </ligand>
</feature>
<feature type="binding site" evidence="1">
    <location>
        <position position="399"/>
    </location>
    <ligand>
        <name>Mn(2+)</name>
        <dbReference type="ChEBI" id="CHEBI:29035"/>
        <label>1</label>
    </ligand>
</feature>
<feature type="binding site" evidence="1">
    <location>
        <position position="436"/>
    </location>
    <ligand>
        <name>Mn(2+)</name>
        <dbReference type="ChEBI" id="CHEBI:29035"/>
        <label>2</label>
    </ligand>
</feature>
<feature type="binding site" evidence="1">
    <location>
        <position position="437"/>
    </location>
    <ligand>
        <name>Mn(2+)</name>
        <dbReference type="ChEBI" id="CHEBI:29035"/>
        <label>2</label>
    </ligand>
</feature>
<feature type="binding site" evidence="1">
    <location>
        <position position="455"/>
    </location>
    <ligand>
        <name>Mn(2+)</name>
        <dbReference type="ChEBI" id="CHEBI:29035"/>
        <label>1</label>
    </ligand>
</feature>
<comment type="function">
    <text evidence="1">Catalyzes the interconversion of 2-phosphoglycerate and 3-phosphoglycerate.</text>
</comment>
<comment type="catalytic activity">
    <reaction evidence="1">
        <text>(2R)-2-phosphoglycerate = (2R)-3-phosphoglycerate</text>
        <dbReference type="Rhea" id="RHEA:15901"/>
        <dbReference type="ChEBI" id="CHEBI:58272"/>
        <dbReference type="ChEBI" id="CHEBI:58289"/>
        <dbReference type="EC" id="5.4.2.12"/>
    </reaction>
</comment>
<comment type="cofactor">
    <cofactor evidence="1">
        <name>Mn(2+)</name>
        <dbReference type="ChEBI" id="CHEBI:29035"/>
    </cofactor>
    <text evidence="1">Binds 2 manganese ions per subunit.</text>
</comment>
<comment type="pathway">
    <text evidence="1">Carbohydrate degradation; glycolysis; pyruvate from D-glyceraldehyde 3-phosphate: step 3/5.</text>
</comment>
<comment type="subunit">
    <text evidence="1">Monomer.</text>
</comment>
<comment type="similarity">
    <text evidence="1">Belongs to the BPG-independent phosphoglycerate mutase family.</text>
</comment>
<proteinExistence type="inferred from homology"/>
<keyword id="KW-0324">Glycolysis</keyword>
<keyword id="KW-0413">Isomerase</keyword>
<keyword id="KW-0464">Manganese</keyword>
<keyword id="KW-0479">Metal-binding</keyword>
<keyword id="KW-1185">Reference proteome</keyword>
<dbReference type="EC" id="5.4.2.12" evidence="1"/>
<dbReference type="EMBL" id="AE007870">
    <property type="protein sequence ID" value="AAK89925.1"/>
    <property type="molecule type" value="Genomic_DNA"/>
</dbReference>
<dbReference type="PIR" id="AD2983">
    <property type="entry name" value="AD2983"/>
</dbReference>
<dbReference type="PIR" id="C98300">
    <property type="entry name" value="C98300"/>
</dbReference>
<dbReference type="RefSeq" id="NP_357140.1">
    <property type="nucleotide sequence ID" value="NC_003063.2"/>
</dbReference>
<dbReference type="RefSeq" id="WP_010973066.1">
    <property type="nucleotide sequence ID" value="NC_003063.2"/>
</dbReference>
<dbReference type="SMR" id="Q8UAA5"/>
<dbReference type="STRING" id="176299.Atu3469"/>
<dbReference type="EnsemblBacteria" id="AAK89925">
    <property type="protein sequence ID" value="AAK89925"/>
    <property type="gene ID" value="Atu3469"/>
</dbReference>
<dbReference type="GeneID" id="1135343"/>
<dbReference type="KEGG" id="atu:Atu3469"/>
<dbReference type="PATRIC" id="fig|176299.10.peg.3308"/>
<dbReference type="eggNOG" id="COG0696">
    <property type="taxonomic scope" value="Bacteria"/>
</dbReference>
<dbReference type="HOGENOM" id="CLU_026099_2_0_5"/>
<dbReference type="OrthoDB" id="9800863at2"/>
<dbReference type="PhylomeDB" id="Q8UAA5"/>
<dbReference type="BioCyc" id="AGRO:ATU3469-MONOMER"/>
<dbReference type="UniPathway" id="UPA00109">
    <property type="reaction ID" value="UER00186"/>
</dbReference>
<dbReference type="Proteomes" id="UP000000813">
    <property type="component" value="Chromosome linear"/>
</dbReference>
<dbReference type="GO" id="GO:0005829">
    <property type="term" value="C:cytosol"/>
    <property type="evidence" value="ECO:0007669"/>
    <property type="project" value="TreeGrafter"/>
</dbReference>
<dbReference type="GO" id="GO:0030145">
    <property type="term" value="F:manganese ion binding"/>
    <property type="evidence" value="ECO:0007669"/>
    <property type="project" value="UniProtKB-UniRule"/>
</dbReference>
<dbReference type="GO" id="GO:0004619">
    <property type="term" value="F:phosphoglycerate mutase activity"/>
    <property type="evidence" value="ECO:0007669"/>
    <property type="project" value="UniProtKB-EC"/>
</dbReference>
<dbReference type="GO" id="GO:0006007">
    <property type="term" value="P:glucose catabolic process"/>
    <property type="evidence" value="ECO:0007669"/>
    <property type="project" value="InterPro"/>
</dbReference>
<dbReference type="GO" id="GO:0006096">
    <property type="term" value="P:glycolytic process"/>
    <property type="evidence" value="ECO:0007669"/>
    <property type="project" value="UniProtKB-UniRule"/>
</dbReference>
<dbReference type="CDD" id="cd16010">
    <property type="entry name" value="iPGM"/>
    <property type="match status" value="1"/>
</dbReference>
<dbReference type="FunFam" id="3.40.1450.10:FF:000002">
    <property type="entry name" value="2,3-bisphosphoglycerate-independent phosphoglycerate mutase"/>
    <property type="match status" value="1"/>
</dbReference>
<dbReference type="Gene3D" id="3.40.720.10">
    <property type="entry name" value="Alkaline Phosphatase, subunit A"/>
    <property type="match status" value="1"/>
</dbReference>
<dbReference type="Gene3D" id="3.40.1450.10">
    <property type="entry name" value="BPG-independent phosphoglycerate mutase, domain B"/>
    <property type="match status" value="1"/>
</dbReference>
<dbReference type="HAMAP" id="MF_01038">
    <property type="entry name" value="GpmI"/>
    <property type="match status" value="1"/>
</dbReference>
<dbReference type="InterPro" id="IPR017850">
    <property type="entry name" value="Alkaline_phosphatase_core_sf"/>
</dbReference>
<dbReference type="InterPro" id="IPR011258">
    <property type="entry name" value="BPG-indep_PGM_N"/>
</dbReference>
<dbReference type="InterPro" id="IPR006124">
    <property type="entry name" value="Metalloenzyme"/>
</dbReference>
<dbReference type="InterPro" id="IPR036646">
    <property type="entry name" value="PGAM_B_sf"/>
</dbReference>
<dbReference type="InterPro" id="IPR005995">
    <property type="entry name" value="Pgm_bpd_ind"/>
</dbReference>
<dbReference type="NCBIfam" id="TIGR01307">
    <property type="entry name" value="pgm_bpd_ind"/>
    <property type="match status" value="1"/>
</dbReference>
<dbReference type="PANTHER" id="PTHR31637">
    <property type="entry name" value="2,3-BISPHOSPHOGLYCERATE-INDEPENDENT PHOSPHOGLYCERATE MUTASE"/>
    <property type="match status" value="1"/>
</dbReference>
<dbReference type="PANTHER" id="PTHR31637:SF0">
    <property type="entry name" value="2,3-BISPHOSPHOGLYCERATE-INDEPENDENT PHOSPHOGLYCERATE MUTASE"/>
    <property type="match status" value="1"/>
</dbReference>
<dbReference type="Pfam" id="PF06415">
    <property type="entry name" value="iPGM_N"/>
    <property type="match status" value="1"/>
</dbReference>
<dbReference type="Pfam" id="PF01676">
    <property type="entry name" value="Metalloenzyme"/>
    <property type="match status" value="1"/>
</dbReference>
<dbReference type="PIRSF" id="PIRSF001492">
    <property type="entry name" value="IPGAM"/>
    <property type="match status" value="1"/>
</dbReference>
<dbReference type="SUPFAM" id="SSF64158">
    <property type="entry name" value="2,3-Bisphosphoglycerate-independent phosphoglycerate mutase, substrate-binding domain"/>
    <property type="match status" value="1"/>
</dbReference>
<dbReference type="SUPFAM" id="SSF53649">
    <property type="entry name" value="Alkaline phosphatase-like"/>
    <property type="match status" value="1"/>
</dbReference>
<organism>
    <name type="scientific">Agrobacterium fabrum (strain C58 / ATCC 33970)</name>
    <name type="common">Agrobacterium tumefaciens (strain C58)</name>
    <dbReference type="NCBI Taxonomy" id="176299"/>
    <lineage>
        <taxon>Bacteria</taxon>
        <taxon>Pseudomonadati</taxon>
        <taxon>Pseudomonadota</taxon>
        <taxon>Alphaproteobacteria</taxon>
        <taxon>Hyphomicrobiales</taxon>
        <taxon>Rhizobiaceae</taxon>
        <taxon>Rhizobium/Agrobacterium group</taxon>
        <taxon>Agrobacterium</taxon>
        <taxon>Agrobacterium tumefaciens complex</taxon>
    </lineage>
</organism>